<dbReference type="EMBL" id="AP009351">
    <property type="protein sequence ID" value="BAF66715.1"/>
    <property type="molecule type" value="Genomic_DNA"/>
</dbReference>
<dbReference type="RefSeq" id="WP_001213992.1">
    <property type="nucleotide sequence ID" value="NZ_JBBIAE010000014.1"/>
</dbReference>
<dbReference type="SMR" id="A6QED3"/>
<dbReference type="KEGG" id="sae:NWMN_0443"/>
<dbReference type="HOGENOM" id="CLU_140930_1_0_9"/>
<dbReference type="Proteomes" id="UP000006386">
    <property type="component" value="Chromosome"/>
</dbReference>
<dbReference type="GO" id="GO:0043590">
    <property type="term" value="C:bacterial nucleoid"/>
    <property type="evidence" value="ECO:0007669"/>
    <property type="project" value="UniProtKB-UniRule"/>
</dbReference>
<dbReference type="GO" id="GO:0005829">
    <property type="term" value="C:cytosol"/>
    <property type="evidence" value="ECO:0007669"/>
    <property type="project" value="TreeGrafter"/>
</dbReference>
<dbReference type="GO" id="GO:0003677">
    <property type="term" value="F:DNA binding"/>
    <property type="evidence" value="ECO:0007669"/>
    <property type="project" value="UniProtKB-UniRule"/>
</dbReference>
<dbReference type="FunFam" id="3.30.1310.10:FF:000002">
    <property type="entry name" value="Nucleoid-associated protein IKC_06587"/>
    <property type="match status" value="1"/>
</dbReference>
<dbReference type="Gene3D" id="3.30.1310.10">
    <property type="entry name" value="Nucleoid-associated protein YbaB-like domain"/>
    <property type="match status" value="1"/>
</dbReference>
<dbReference type="HAMAP" id="MF_00274">
    <property type="entry name" value="DNA_YbaB_EbfC"/>
    <property type="match status" value="1"/>
</dbReference>
<dbReference type="InterPro" id="IPR036894">
    <property type="entry name" value="YbaB-like_sf"/>
</dbReference>
<dbReference type="InterPro" id="IPR004401">
    <property type="entry name" value="YbaB/EbfC"/>
</dbReference>
<dbReference type="NCBIfam" id="TIGR00103">
    <property type="entry name" value="DNA_YbaB_EbfC"/>
    <property type="match status" value="1"/>
</dbReference>
<dbReference type="PANTHER" id="PTHR33449">
    <property type="entry name" value="NUCLEOID-ASSOCIATED PROTEIN YBAB"/>
    <property type="match status" value="1"/>
</dbReference>
<dbReference type="PANTHER" id="PTHR33449:SF1">
    <property type="entry name" value="NUCLEOID-ASSOCIATED PROTEIN YBAB"/>
    <property type="match status" value="1"/>
</dbReference>
<dbReference type="Pfam" id="PF02575">
    <property type="entry name" value="YbaB_DNA_bd"/>
    <property type="match status" value="1"/>
</dbReference>
<dbReference type="PIRSF" id="PIRSF004555">
    <property type="entry name" value="UCP004555"/>
    <property type="match status" value="1"/>
</dbReference>
<dbReference type="SUPFAM" id="SSF82607">
    <property type="entry name" value="YbaB-like"/>
    <property type="match status" value="1"/>
</dbReference>
<proteinExistence type="inferred from homology"/>
<evidence type="ECO:0000255" key="1">
    <source>
        <dbReference type="HAMAP-Rule" id="MF_00274"/>
    </source>
</evidence>
<evidence type="ECO:0000256" key="2">
    <source>
        <dbReference type="SAM" id="MobiDB-lite"/>
    </source>
</evidence>
<sequence length="105" mass="11597">MRGGGNMQQMMKQMQKMQKKMAQEQEKLKEERIVGTAGGGMVAVTVTGHKEVVDVEIKEEAVDPDDIEMLQDLVLAATNEAMNKADELTQERLGKHTQGLNIPGM</sequence>
<keyword id="KW-0963">Cytoplasm</keyword>
<keyword id="KW-0238">DNA-binding</keyword>
<accession>A6QED3</accession>
<feature type="chain" id="PRO_1000071925" description="Nucleoid-associated protein NWMN_0443">
    <location>
        <begin position="1"/>
        <end position="105"/>
    </location>
</feature>
<feature type="region of interest" description="Disordered" evidence="2">
    <location>
        <begin position="1"/>
        <end position="33"/>
    </location>
</feature>
<feature type="compositionally biased region" description="Low complexity" evidence="2">
    <location>
        <begin position="7"/>
        <end position="16"/>
    </location>
</feature>
<feature type="compositionally biased region" description="Basic and acidic residues" evidence="2">
    <location>
        <begin position="21"/>
        <end position="33"/>
    </location>
</feature>
<protein>
    <recommendedName>
        <fullName evidence="1">Nucleoid-associated protein NWMN_0443</fullName>
    </recommendedName>
</protein>
<reference key="1">
    <citation type="journal article" date="2008" name="J. Bacteriol.">
        <title>Genome sequence of Staphylococcus aureus strain Newman and comparative analysis of staphylococcal genomes: polymorphism and evolution of two major pathogenicity islands.</title>
        <authorList>
            <person name="Baba T."/>
            <person name="Bae T."/>
            <person name="Schneewind O."/>
            <person name="Takeuchi F."/>
            <person name="Hiramatsu K."/>
        </authorList>
    </citation>
    <scope>NUCLEOTIDE SEQUENCE [LARGE SCALE GENOMIC DNA]</scope>
    <source>
        <strain>Newman</strain>
    </source>
</reference>
<organism>
    <name type="scientific">Staphylococcus aureus (strain Newman)</name>
    <dbReference type="NCBI Taxonomy" id="426430"/>
    <lineage>
        <taxon>Bacteria</taxon>
        <taxon>Bacillati</taxon>
        <taxon>Bacillota</taxon>
        <taxon>Bacilli</taxon>
        <taxon>Bacillales</taxon>
        <taxon>Staphylococcaceae</taxon>
        <taxon>Staphylococcus</taxon>
    </lineage>
</organism>
<gene>
    <name type="ordered locus">NWMN_0443</name>
</gene>
<name>Y443_STAAE</name>
<comment type="function">
    <text evidence="1">Binds to DNA and alters its conformation. May be involved in regulation of gene expression, nucleoid organization and DNA protection.</text>
</comment>
<comment type="subunit">
    <text evidence="1">Homodimer.</text>
</comment>
<comment type="subcellular location">
    <subcellularLocation>
        <location evidence="1">Cytoplasm</location>
        <location evidence="1">Nucleoid</location>
    </subcellularLocation>
</comment>
<comment type="similarity">
    <text evidence="1">Belongs to the YbaB/EbfC family.</text>
</comment>